<accession>B4GA28</accession>
<organism>
    <name type="scientific">Drosophila persimilis</name>
    <name type="common">Fruit fly</name>
    <dbReference type="NCBI Taxonomy" id="7234"/>
    <lineage>
        <taxon>Eukaryota</taxon>
        <taxon>Metazoa</taxon>
        <taxon>Ecdysozoa</taxon>
        <taxon>Arthropoda</taxon>
        <taxon>Hexapoda</taxon>
        <taxon>Insecta</taxon>
        <taxon>Pterygota</taxon>
        <taxon>Neoptera</taxon>
        <taxon>Endopterygota</taxon>
        <taxon>Diptera</taxon>
        <taxon>Brachycera</taxon>
        <taxon>Muscomorpha</taxon>
        <taxon>Ephydroidea</taxon>
        <taxon>Drosophilidae</taxon>
        <taxon>Drosophila</taxon>
        <taxon>Sophophora</taxon>
    </lineage>
</organism>
<reference key="1">
    <citation type="journal article" date="2007" name="Nature">
        <title>Evolution of genes and genomes on the Drosophila phylogeny.</title>
        <authorList>
            <consortium name="Drosophila 12 genomes consortium"/>
        </authorList>
    </citation>
    <scope>NUCLEOTIDE SEQUENCE [LARGE SCALE GENOMIC DNA]</scope>
    <source>
        <strain>MSH-3 / Tucson 14011-0111.49</strain>
    </source>
</reference>
<sequence length="692" mass="78064">MSCFSHVMNPITGENSWQEREDDYDYHQEVANAGFGDMLHDWERNQKYFAALRKTIKGMRAAGREVHVLDIGTGTGILSMMALKAGADSVTACEAFLPMANCAAKIFTDNGVGDKVQLIRKRSTDIKIGADLDMPQRANLLVAELLDTELIGEGAISIYNHAHAELLTDDALCIPARARCYAQVAQSPLASQWNSLKILPSLDGEALLRPPEQLKSCKGEAALHDVQLSQLPAGTFRLLTEPIEIFQLDFQRKEKREKQREKLVQLQASQPGAAELVFYWWDIQLDDQGEILLSCAPYWAHPELNELSASKEERVPVANVVPWRDHWMQAIYYVPKPPQLATAGQDFYLSCHHDEYSLWFDAMLEAPAKTVRRHTCSCDLHMTYSRSRIGQLNQAIRNKRYLRYLEATIVPKQSNVLVLGNGCMLGLASAALGAASVQLHEPHRFSRRLIDSIVQHNELKNVKYVENVEQLEDTELIALSHVFAEPYFLNAILPWDNFYFGTLLMKLKDKLPEKVEISPCEARIFALPVEFLDLHKIRAPVGSCEGFDLRLFDEMVERSAEQAVSLVEAQPLWEYPSRALAEPQQLLSVDFANFNVEHHLQGSIELTQSGVCNGIALWVDWHLDKTNNPKSIVSTGPSEAVVPGEFVKWDMFVRQGVHFPRKPTDLSGRVAWSTDFKPLLGQLNFGFSQEKR</sequence>
<proteinExistence type="inferred from homology"/>
<name>ANM7_DROPE</name>
<dbReference type="EC" id="2.1.1.-"/>
<dbReference type="EMBL" id="CH479181">
    <property type="protein sequence ID" value="EDW31780.1"/>
    <property type="molecule type" value="Genomic_DNA"/>
</dbReference>
<dbReference type="SMR" id="B4GA28"/>
<dbReference type="STRING" id="7234.B4GA28"/>
<dbReference type="EnsemblMetazoa" id="FBtr0176916">
    <property type="protein sequence ID" value="FBpp0175408"/>
    <property type="gene ID" value="FBgn0148910"/>
</dbReference>
<dbReference type="EnsemblMetazoa" id="XM_002015854.2">
    <property type="protein sequence ID" value="XP_002015890.1"/>
    <property type="gene ID" value="LOC6590260"/>
</dbReference>
<dbReference type="GeneID" id="6590260"/>
<dbReference type="KEGG" id="dpe:6590260"/>
<dbReference type="CTD" id="37664"/>
<dbReference type="eggNOG" id="KOG1501">
    <property type="taxonomic scope" value="Eukaryota"/>
</dbReference>
<dbReference type="HOGENOM" id="CLU_015180_0_0_1"/>
<dbReference type="OMA" id="CHHDEYS"/>
<dbReference type="OrthoDB" id="412876at2759"/>
<dbReference type="PhylomeDB" id="B4GA28"/>
<dbReference type="Proteomes" id="UP000008744">
    <property type="component" value="Unassembled WGS sequence"/>
</dbReference>
<dbReference type="GO" id="GO:0042054">
    <property type="term" value="F:histone methyltransferase activity"/>
    <property type="evidence" value="ECO:0007669"/>
    <property type="project" value="TreeGrafter"/>
</dbReference>
<dbReference type="GO" id="GO:0035243">
    <property type="term" value="F:protein-arginine omega-N symmetric methyltransferase activity"/>
    <property type="evidence" value="ECO:0000250"/>
    <property type="project" value="UniProtKB"/>
</dbReference>
<dbReference type="GO" id="GO:0018216">
    <property type="term" value="P:peptidyl-arginine methylation"/>
    <property type="evidence" value="ECO:0000250"/>
    <property type="project" value="UniProtKB"/>
</dbReference>
<dbReference type="CDD" id="cd02440">
    <property type="entry name" value="AdoMet_MTases"/>
    <property type="match status" value="1"/>
</dbReference>
<dbReference type="FunFam" id="2.70.160.11:FF:000014">
    <property type="entry name" value="Protein arginine N-methyltransferase 7"/>
    <property type="match status" value="1"/>
</dbReference>
<dbReference type="FunFam" id="2.70.160.11:FF:000019">
    <property type="entry name" value="Protein arginine N-methyltransferase 7"/>
    <property type="match status" value="1"/>
</dbReference>
<dbReference type="FunFam" id="3.40.50.150:FF:000070">
    <property type="entry name" value="Protein arginine N-methyltransferase 7"/>
    <property type="match status" value="1"/>
</dbReference>
<dbReference type="FunFam" id="3.40.50.150:FF:000071">
    <property type="entry name" value="Protein arginine N-methyltransferase 7"/>
    <property type="match status" value="1"/>
</dbReference>
<dbReference type="Gene3D" id="2.70.160.11">
    <property type="entry name" value="Hnrnp arginine n-methyltransferase1"/>
    <property type="match status" value="2"/>
</dbReference>
<dbReference type="Gene3D" id="3.40.50.150">
    <property type="entry name" value="Vaccinia Virus protein VP39"/>
    <property type="match status" value="2"/>
</dbReference>
<dbReference type="InterPro" id="IPR025799">
    <property type="entry name" value="Arg_MeTrfase"/>
</dbReference>
<dbReference type="InterPro" id="IPR014644">
    <property type="entry name" value="MeTrfase_PRMT7"/>
</dbReference>
<dbReference type="InterPro" id="IPR055135">
    <property type="entry name" value="PRMT_dom"/>
</dbReference>
<dbReference type="InterPro" id="IPR029063">
    <property type="entry name" value="SAM-dependent_MTases_sf"/>
</dbReference>
<dbReference type="PANTHER" id="PTHR11006">
    <property type="entry name" value="PROTEIN ARGININE N-METHYLTRANSFERASE"/>
    <property type="match status" value="1"/>
</dbReference>
<dbReference type="PANTHER" id="PTHR11006:SF4">
    <property type="entry name" value="PROTEIN ARGININE N-METHYLTRANSFERASE 7"/>
    <property type="match status" value="1"/>
</dbReference>
<dbReference type="Pfam" id="PF06325">
    <property type="entry name" value="PrmA"/>
    <property type="match status" value="1"/>
</dbReference>
<dbReference type="Pfam" id="PF22528">
    <property type="entry name" value="PRMT_C"/>
    <property type="match status" value="2"/>
</dbReference>
<dbReference type="PIRSF" id="PIRSF036946">
    <property type="entry name" value="Arg_N-mtase"/>
    <property type="match status" value="1"/>
</dbReference>
<dbReference type="SUPFAM" id="SSF53335">
    <property type="entry name" value="S-adenosyl-L-methionine-dependent methyltransferases"/>
    <property type="match status" value="2"/>
</dbReference>
<dbReference type="PROSITE" id="PS51678">
    <property type="entry name" value="SAM_MT_PRMT"/>
    <property type="match status" value="2"/>
</dbReference>
<protein>
    <recommendedName>
        <fullName>Protein arginine N-methyltransferase 7</fullName>
        <ecNumber>2.1.1.-</ecNumber>
    </recommendedName>
</protein>
<keyword id="KW-0489">Methyltransferase</keyword>
<keyword id="KW-1185">Reference proteome</keyword>
<keyword id="KW-0677">Repeat</keyword>
<keyword id="KW-0949">S-adenosyl-L-methionine</keyword>
<keyword id="KW-0808">Transferase</keyword>
<comment type="function">
    <text evidence="1">Essential arginine methyltransferase that can both catalyze the formation of omega-N monomethylarginine (MMA) and symmetrical dimethylarginine (sDMA). Specifically mediates the symmetrical dimethylation of arginine residues in the small nuclear ribonucleoproteins SmD1 and SmD3 (By similarity).</text>
</comment>
<comment type="similarity">
    <text evidence="2">Belongs to the class I-like SAM-binding methyltransferase superfamily. Protein arginine N-methyltransferase family. PRMT7 subfamily.</text>
</comment>
<gene>
    <name type="primary">Art7</name>
    <name type="ORF">GL11301</name>
</gene>
<feature type="chain" id="PRO_0000373916" description="Protein arginine N-methyltransferase 7">
    <location>
        <begin position="1"/>
        <end position="692"/>
    </location>
</feature>
<feature type="domain" description="SAM-dependent MTase PRMT-type 1" evidence="2">
    <location>
        <begin position="14"/>
        <end position="359"/>
    </location>
</feature>
<feature type="domain" description="SAM-dependent MTase PRMT-type 2" evidence="2">
    <location>
        <begin position="368"/>
        <end position="692"/>
    </location>
</feature>
<evidence type="ECO:0000250" key="1"/>
<evidence type="ECO:0000255" key="2">
    <source>
        <dbReference type="PROSITE-ProRule" id="PRU01015"/>
    </source>
</evidence>